<organism>
    <name type="scientific">Rickettsia africae (strain ESF-5)</name>
    <dbReference type="NCBI Taxonomy" id="347255"/>
    <lineage>
        <taxon>Bacteria</taxon>
        <taxon>Pseudomonadati</taxon>
        <taxon>Pseudomonadota</taxon>
        <taxon>Alphaproteobacteria</taxon>
        <taxon>Rickettsiales</taxon>
        <taxon>Rickettsiaceae</taxon>
        <taxon>Rickettsieae</taxon>
        <taxon>Rickettsia</taxon>
        <taxon>spotted fever group</taxon>
    </lineage>
</organism>
<gene>
    <name evidence="1" type="primary">clpX</name>
    <name type="ordered locus">RAF_ORF0974</name>
</gene>
<protein>
    <recommendedName>
        <fullName evidence="1">ATP-dependent Clp protease ATP-binding subunit ClpX</fullName>
    </recommendedName>
</protein>
<reference key="1">
    <citation type="journal article" date="2009" name="BMC Genomics">
        <title>Analysis of the Rickettsia africae genome reveals that virulence acquisition in Rickettsia species may be explained by genome reduction.</title>
        <authorList>
            <person name="Fournier P.-E."/>
            <person name="El Karkouri K."/>
            <person name="Leroy Q."/>
            <person name="Robert C."/>
            <person name="Giumelli B."/>
            <person name="Renesto P."/>
            <person name="Socolovschi C."/>
            <person name="Parola P."/>
            <person name="Audic S."/>
            <person name="Raoult D."/>
        </authorList>
    </citation>
    <scope>NUCLEOTIDE SEQUENCE [LARGE SCALE GENOMIC DNA]</scope>
    <source>
        <strain>ESF-5</strain>
    </source>
</reference>
<feature type="chain" id="PRO_1000203741" description="ATP-dependent Clp protease ATP-binding subunit ClpX">
    <location>
        <begin position="1"/>
        <end position="425"/>
    </location>
</feature>
<feature type="domain" description="ClpX-type ZB" evidence="2">
    <location>
        <begin position="1"/>
        <end position="53"/>
    </location>
</feature>
<feature type="binding site" evidence="2">
    <location>
        <position position="12"/>
    </location>
    <ligand>
        <name>Zn(2+)</name>
        <dbReference type="ChEBI" id="CHEBI:29105"/>
    </ligand>
</feature>
<feature type="binding site" evidence="2">
    <location>
        <position position="15"/>
    </location>
    <ligand>
        <name>Zn(2+)</name>
        <dbReference type="ChEBI" id="CHEBI:29105"/>
    </ligand>
</feature>
<feature type="binding site" evidence="2">
    <location>
        <position position="34"/>
    </location>
    <ligand>
        <name>Zn(2+)</name>
        <dbReference type="ChEBI" id="CHEBI:29105"/>
    </ligand>
</feature>
<feature type="binding site" evidence="2">
    <location>
        <position position="37"/>
    </location>
    <ligand>
        <name>Zn(2+)</name>
        <dbReference type="ChEBI" id="CHEBI:29105"/>
    </ligand>
</feature>
<feature type="binding site" evidence="1">
    <location>
        <begin position="117"/>
        <end position="124"/>
    </location>
    <ligand>
        <name>ATP</name>
        <dbReference type="ChEBI" id="CHEBI:30616"/>
    </ligand>
</feature>
<dbReference type="EMBL" id="CP001612">
    <property type="protein sequence ID" value="ACP53809.1"/>
    <property type="molecule type" value="Genomic_DNA"/>
</dbReference>
<dbReference type="RefSeq" id="WP_012719952.1">
    <property type="nucleotide sequence ID" value="NC_012633.1"/>
</dbReference>
<dbReference type="SMR" id="C3PLG9"/>
<dbReference type="KEGG" id="raf:RAF_ORF0974"/>
<dbReference type="HOGENOM" id="CLU_014218_8_2_5"/>
<dbReference type="Proteomes" id="UP000002305">
    <property type="component" value="Chromosome"/>
</dbReference>
<dbReference type="GO" id="GO:0009376">
    <property type="term" value="C:HslUV protease complex"/>
    <property type="evidence" value="ECO:0007669"/>
    <property type="project" value="TreeGrafter"/>
</dbReference>
<dbReference type="GO" id="GO:0005524">
    <property type="term" value="F:ATP binding"/>
    <property type="evidence" value="ECO:0007669"/>
    <property type="project" value="UniProtKB-UniRule"/>
</dbReference>
<dbReference type="GO" id="GO:0016887">
    <property type="term" value="F:ATP hydrolysis activity"/>
    <property type="evidence" value="ECO:0007669"/>
    <property type="project" value="InterPro"/>
</dbReference>
<dbReference type="GO" id="GO:0140662">
    <property type="term" value="F:ATP-dependent protein folding chaperone"/>
    <property type="evidence" value="ECO:0007669"/>
    <property type="project" value="InterPro"/>
</dbReference>
<dbReference type="GO" id="GO:0046983">
    <property type="term" value="F:protein dimerization activity"/>
    <property type="evidence" value="ECO:0007669"/>
    <property type="project" value="InterPro"/>
</dbReference>
<dbReference type="GO" id="GO:0051082">
    <property type="term" value="F:unfolded protein binding"/>
    <property type="evidence" value="ECO:0007669"/>
    <property type="project" value="UniProtKB-UniRule"/>
</dbReference>
<dbReference type="GO" id="GO:0008270">
    <property type="term" value="F:zinc ion binding"/>
    <property type="evidence" value="ECO:0007669"/>
    <property type="project" value="InterPro"/>
</dbReference>
<dbReference type="GO" id="GO:0051301">
    <property type="term" value="P:cell division"/>
    <property type="evidence" value="ECO:0007669"/>
    <property type="project" value="TreeGrafter"/>
</dbReference>
<dbReference type="GO" id="GO:0051603">
    <property type="term" value="P:proteolysis involved in protein catabolic process"/>
    <property type="evidence" value="ECO:0007669"/>
    <property type="project" value="TreeGrafter"/>
</dbReference>
<dbReference type="CDD" id="cd19497">
    <property type="entry name" value="RecA-like_ClpX"/>
    <property type="match status" value="1"/>
</dbReference>
<dbReference type="FunFam" id="1.10.8.60:FF:000002">
    <property type="entry name" value="ATP-dependent Clp protease ATP-binding subunit ClpX"/>
    <property type="match status" value="1"/>
</dbReference>
<dbReference type="FunFam" id="3.40.50.300:FF:000005">
    <property type="entry name" value="ATP-dependent Clp protease ATP-binding subunit ClpX"/>
    <property type="match status" value="1"/>
</dbReference>
<dbReference type="Gene3D" id="1.10.8.60">
    <property type="match status" value="1"/>
</dbReference>
<dbReference type="Gene3D" id="6.20.220.10">
    <property type="entry name" value="ClpX chaperone, C4-type zinc finger domain"/>
    <property type="match status" value="1"/>
</dbReference>
<dbReference type="Gene3D" id="3.40.50.300">
    <property type="entry name" value="P-loop containing nucleotide triphosphate hydrolases"/>
    <property type="match status" value="1"/>
</dbReference>
<dbReference type="HAMAP" id="MF_00175">
    <property type="entry name" value="ClpX"/>
    <property type="match status" value="1"/>
</dbReference>
<dbReference type="InterPro" id="IPR003593">
    <property type="entry name" value="AAA+_ATPase"/>
</dbReference>
<dbReference type="InterPro" id="IPR050052">
    <property type="entry name" value="ATP-dep_Clp_protease_ClpX"/>
</dbReference>
<dbReference type="InterPro" id="IPR003959">
    <property type="entry name" value="ATPase_AAA_core"/>
</dbReference>
<dbReference type="InterPro" id="IPR019489">
    <property type="entry name" value="Clp_ATPase_C"/>
</dbReference>
<dbReference type="InterPro" id="IPR004487">
    <property type="entry name" value="Clp_protease_ATP-bd_su_ClpX"/>
</dbReference>
<dbReference type="InterPro" id="IPR046425">
    <property type="entry name" value="ClpX_bact"/>
</dbReference>
<dbReference type="InterPro" id="IPR027417">
    <property type="entry name" value="P-loop_NTPase"/>
</dbReference>
<dbReference type="InterPro" id="IPR010603">
    <property type="entry name" value="Znf_CppX_C4"/>
</dbReference>
<dbReference type="InterPro" id="IPR038366">
    <property type="entry name" value="Znf_CppX_C4_sf"/>
</dbReference>
<dbReference type="NCBIfam" id="TIGR00382">
    <property type="entry name" value="clpX"/>
    <property type="match status" value="1"/>
</dbReference>
<dbReference type="NCBIfam" id="NF003745">
    <property type="entry name" value="PRK05342.1"/>
    <property type="match status" value="1"/>
</dbReference>
<dbReference type="PANTHER" id="PTHR48102:SF7">
    <property type="entry name" value="ATP-DEPENDENT CLP PROTEASE ATP-BINDING SUBUNIT CLPX-LIKE, MITOCHONDRIAL"/>
    <property type="match status" value="1"/>
</dbReference>
<dbReference type="PANTHER" id="PTHR48102">
    <property type="entry name" value="ATP-DEPENDENT CLP PROTEASE ATP-BINDING SUBUNIT CLPX-LIKE, MITOCHONDRIAL-RELATED"/>
    <property type="match status" value="1"/>
</dbReference>
<dbReference type="Pfam" id="PF07724">
    <property type="entry name" value="AAA_2"/>
    <property type="match status" value="1"/>
</dbReference>
<dbReference type="Pfam" id="PF10431">
    <property type="entry name" value="ClpB_D2-small"/>
    <property type="match status" value="1"/>
</dbReference>
<dbReference type="Pfam" id="PF06689">
    <property type="entry name" value="zf-C4_ClpX"/>
    <property type="match status" value="1"/>
</dbReference>
<dbReference type="SMART" id="SM00382">
    <property type="entry name" value="AAA"/>
    <property type="match status" value="1"/>
</dbReference>
<dbReference type="SMART" id="SM01086">
    <property type="entry name" value="ClpB_D2-small"/>
    <property type="match status" value="1"/>
</dbReference>
<dbReference type="SMART" id="SM00994">
    <property type="entry name" value="zf-C4_ClpX"/>
    <property type="match status" value="1"/>
</dbReference>
<dbReference type="SUPFAM" id="SSF57716">
    <property type="entry name" value="Glucocorticoid receptor-like (DNA-binding domain)"/>
    <property type="match status" value="1"/>
</dbReference>
<dbReference type="SUPFAM" id="SSF52540">
    <property type="entry name" value="P-loop containing nucleoside triphosphate hydrolases"/>
    <property type="match status" value="1"/>
</dbReference>
<dbReference type="PROSITE" id="PS51902">
    <property type="entry name" value="CLPX_ZB"/>
    <property type="match status" value="1"/>
</dbReference>
<evidence type="ECO:0000255" key="1">
    <source>
        <dbReference type="HAMAP-Rule" id="MF_00175"/>
    </source>
</evidence>
<evidence type="ECO:0000255" key="2">
    <source>
        <dbReference type="PROSITE-ProRule" id="PRU01250"/>
    </source>
</evidence>
<proteinExistence type="inferred from homology"/>
<accession>C3PLG9</accession>
<sequence length="425" mass="46610">MVVEADKKALICSFCSKKQHEVKKLIAGPAVFICDECIDLCTDIMKEENKVALKQITSSIPTPQKICGILNDYVVGQDQAKKILAVAVYNHYKRLEYVQSGNNDVELNKSNILLIGPTGSGKTLLAQTLAKILDVPFTMADATSLTEAGYVGEDVENILLRLLIASEFNIAKAQKGIIYIDEVDKIARKSENPSITRDVSGEGVQQALLKIMEGTVASVPPQGGRKHPQQDFVQLDTSNILFICGGAFMGIDSIITSRTNHSSIGFAANVNIDKEKNNSEILKSLEVEDLTKFGLIPEFIGRLPIVTTLDELDKEALITILTKPKNAIVKQYQKQFELDDAELVIDYSALETIAEKALAKKTGARGLRSILEHLLLDSMYKVAELKKQRVTITKEVVNGLVEPIMTSLISTKSNKKQPIIADIPA</sequence>
<name>CLPX_RICAE</name>
<keyword id="KW-0067">ATP-binding</keyword>
<keyword id="KW-0143">Chaperone</keyword>
<keyword id="KW-0479">Metal-binding</keyword>
<keyword id="KW-0547">Nucleotide-binding</keyword>
<keyword id="KW-0862">Zinc</keyword>
<comment type="function">
    <text evidence="1">ATP-dependent specificity component of the Clp protease. It directs the protease to specific substrates. Can perform chaperone functions in the absence of ClpP.</text>
</comment>
<comment type="subunit">
    <text evidence="1">Component of the ClpX-ClpP complex. Forms a hexameric ring that, in the presence of ATP, binds to fourteen ClpP subunits assembled into a disk-like structure with a central cavity, resembling the structure of eukaryotic proteasomes.</text>
</comment>
<comment type="similarity">
    <text evidence="1">Belongs to the ClpX chaperone family.</text>
</comment>